<proteinExistence type="inferred from homology"/>
<evidence type="ECO:0000255" key="1">
    <source>
        <dbReference type="HAMAP-Rule" id="MF_01448"/>
    </source>
</evidence>
<comment type="similarity">
    <text evidence="1">Belongs to the UPF0473 family.</text>
</comment>
<accession>Q8XJH9</accession>
<organism>
    <name type="scientific">Clostridium perfringens (strain 13 / Type A)</name>
    <dbReference type="NCBI Taxonomy" id="195102"/>
    <lineage>
        <taxon>Bacteria</taxon>
        <taxon>Bacillati</taxon>
        <taxon>Bacillota</taxon>
        <taxon>Clostridia</taxon>
        <taxon>Eubacteriales</taxon>
        <taxon>Clostridiaceae</taxon>
        <taxon>Clostridium</taxon>
    </lineage>
</organism>
<gene>
    <name type="ordered locus">CPE1777</name>
</gene>
<name>Y1777_CLOPE</name>
<protein>
    <recommendedName>
        <fullName evidence="1">UPF0473 protein CPE1777</fullName>
    </recommendedName>
</protein>
<dbReference type="EMBL" id="BA000016">
    <property type="protein sequence ID" value="BAB81483.1"/>
    <property type="molecule type" value="Genomic_DNA"/>
</dbReference>
<dbReference type="RefSeq" id="WP_003459598.1">
    <property type="nucleotide sequence ID" value="NC_003366.1"/>
</dbReference>
<dbReference type="STRING" id="195102.gene:10491041"/>
<dbReference type="KEGG" id="cpe:CPE1777"/>
<dbReference type="HOGENOM" id="CLU_146610_8_0_9"/>
<dbReference type="Proteomes" id="UP000000818">
    <property type="component" value="Chromosome"/>
</dbReference>
<dbReference type="HAMAP" id="MF_01448">
    <property type="entry name" value="UPF0473"/>
    <property type="match status" value="1"/>
</dbReference>
<dbReference type="InterPro" id="IPR009711">
    <property type="entry name" value="UPF0473"/>
</dbReference>
<dbReference type="NCBIfam" id="NF010220">
    <property type="entry name" value="PRK13678.2-3"/>
    <property type="match status" value="1"/>
</dbReference>
<dbReference type="PANTHER" id="PTHR40066">
    <property type="entry name" value="UPF0473 PROTEIN CBO2561/CLC_2432"/>
    <property type="match status" value="1"/>
</dbReference>
<dbReference type="PANTHER" id="PTHR40066:SF1">
    <property type="entry name" value="UPF0473 PROTEIN CBO2561_CLC_2432"/>
    <property type="match status" value="1"/>
</dbReference>
<dbReference type="Pfam" id="PF06949">
    <property type="entry name" value="DUF1292"/>
    <property type="match status" value="1"/>
</dbReference>
<reference key="1">
    <citation type="journal article" date="2002" name="Proc. Natl. Acad. Sci. U.S.A.">
        <title>Complete genome sequence of Clostridium perfringens, an anaerobic flesh-eater.</title>
        <authorList>
            <person name="Shimizu T."/>
            <person name="Ohtani K."/>
            <person name="Hirakawa H."/>
            <person name="Ohshima K."/>
            <person name="Yamashita A."/>
            <person name="Shiba T."/>
            <person name="Ogasawara N."/>
            <person name="Hattori M."/>
            <person name="Kuhara S."/>
            <person name="Hayashi H."/>
        </authorList>
    </citation>
    <scope>NUCLEOTIDE SEQUENCE [LARGE SCALE GENOMIC DNA]</scope>
    <source>
        <strain>13 / Type A</strain>
    </source>
</reference>
<feature type="chain" id="PRO_0000304824" description="UPF0473 protein CPE1777">
    <location>
        <begin position="1"/>
        <end position="84"/>
    </location>
</feature>
<sequence length="84" mass="9586">MNNDLQPIVLVDEEGIETTFNVVTKLDIEEKEYFLLSPEGEEDVVIAMQVVQDEDGEETLAPVENDFEIEMIEEAYATLFAEEE</sequence>
<keyword id="KW-1185">Reference proteome</keyword>